<proteinExistence type="evidence at transcript level"/>
<protein>
    <recommendedName>
        <fullName>Coiled-coil domain-containing protein 169</fullName>
    </recommendedName>
</protein>
<sequence>MENVGDGSAAAPVDSYRLTEEIQLEKNKKEMLQMSTFELKNTIAELEQRLNSVEDEGNEWKTRYETQIELNKQLERQIYILREKSENIRGNPTDRLSSIRSLDQMPVGALNQFVKHLDDEKILLENQLKNFELRIEQEAKAYYKVNNERRMYISEIAQTSVTQEAAKKQQSDPAHATREKPAFKAKYNGLAKRRTMTKRRGGMTKGSHPSNMKH</sequence>
<evidence type="ECO:0000255" key="1"/>
<evidence type="ECO:0000256" key="2">
    <source>
        <dbReference type="SAM" id="MobiDB-lite"/>
    </source>
</evidence>
<evidence type="ECO:0000305" key="3"/>
<comment type="similarity">
    <text evidence="3">Belongs to the CCDC169 family.</text>
</comment>
<comment type="sequence caution" evidence="3">
    <conflict type="erroneous initiation">
        <sequence resource="EMBL-CDS" id="AAI06575"/>
    </conflict>
    <text>Extended N-terminus.</text>
</comment>
<accession>Q3KPT0</accession>
<organism>
    <name type="scientific">Xenopus laevis</name>
    <name type="common">African clawed frog</name>
    <dbReference type="NCBI Taxonomy" id="8355"/>
    <lineage>
        <taxon>Eukaryota</taxon>
        <taxon>Metazoa</taxon>
        <taxon>Chordata</taxon>
        <taxon>Craniata</taxon>
        <taxon>Vertebrata</taxon>
        <taxon>Euteleostomi</taxon>
        <taxon>Amphibia</taxon>
        <taxon>Batrachia</taxon>
        <taxon>Anura</taxon>
        <taxon>Pipoidea</taxon>
        <taxon>Pipidae</taxon>
        <taxon>Xenopodinae</taxon>
        <taxon>Xenopus</taxon>
        <taxon>Xenopus</taxon>
    </lineage>
</organism>
<feature type="chain" id="PRO_0000341368" description="Coiled-coil domain-containing protein 169">
    <location>
        <begin position="1"/>
        <end position="214"/>
    </location>
</feature>
<feature type="region of interest" description="Disordered" evidence="2">
    <location>
        <begin position="161"/>
        <end position="214"/>
    </location>
</feature>
<feature type="coiled-coil region" evidence="1">
    <location>
        <begin position="30"/>
        <end position="144"/>
    </location>
</feature>
<feature type="compositionally biased region" description="Basic and acidic residues" evidence="2">
    <location>
        <begin position="165"/>
        <end position="182"/>
    </location>
</feature>
<feature type="compositionally biased region" description="Basic residues" evidence="2">
    <location>
        <begin position="191"/>
        <end position="202"/>
    </location>
</feature>
<gene>
    <name type="primary">ccdc169</name>
</gene>
<keyword id="KW-0175">Coiled coil</keyword>
<keyword id="KW-1185">Reference proteome</keyword>
<dbReference type="EMBL" id="BC106574">
    <property type="protein sequence ID" value="AAI06575.1"/>
    <property type="status" value="ALT_INIT"/>
    <property type="molecule type" value="mRNA"/>
</dbReference>
<dbReference type="SMR" id="Q3KPT0"/>
<dbReference type="AGR" id="Xenbase:XB-GENE-955771"/>
<dbReference type="Xenbase" id="XB-GENE-955771">
    <property type="gene designation" value="ccdc169.S"/>
</dbReference>
<dbReference type="Proteomes" id="UP000186698">
    <property type="component" value="Unplaced"/>
</dbReference>
<dbReference type="InterPro" id="IPR028022">
    <property type="entry name" value="DUF4600"/>
</dbReference>
<dbReference type="PANTHER" id="PTHR28671">
    <property type="entry name" value="COILED-COIL DOMAIN-CONTAINING PROTEIN 169"/>
    <property type="match status" value="1"/>
</dbReference>
<dbReference type="PANTHER" id="PTHR28671:SF3">
    <property type="entry name" value="COILED-COIL DOMAIN-CONTAINING PROTEIN 169"/>
    <property type="match status" value="1"/>
</dbReference>
<dbReference type="Pfam" id="PF15372">
    <property type="entry name" value="DUF4600"/>
    <property type="match status" value="1"/>
</dbReference>
<name>CC169_XENLA</name>
<reference key="1">
    <citation type="submission" date="2005-10" db="EMBL/GenBank/DDBJ databases">
        <authorList>
            <consortium name="NIH - Xenopus Gene Collection (XGC) project"/>
        </authorList>
    </citation>
    <scope>NUCLEOTIDE SEQUENCE [LARGE SCALE MRNA]</scope>
    <source>
        <tissue>Testis</tissue>
    </source>
</reference>